<accession>Q83NI1</accession>
<keyword id="KW-1003">Cell membrane</keyword>
<keyword id="KW-0342">GTP-binding</keyword>
<keyword id="KW-0378">Hydrolase</keyword>
<keyword id="KW-0472">Membrane</keyword>
<keyword id="KW-0547">Nucleotide-binding</keyword>
<keyword id="KW-0648">Protein biosynthesis</keyword>
<protein>
    <recommendedName>
        <fullName evidence="1">Elongation factor 4</fullName>
        <shortName evidence="1">EF-4</shortName>
        <ecNumber evidence="1">3.6.5.n1</ecNumber>
    </recommendedName>
    <alternativeName>
        <fullName evidence="1">Ribosomal back-translocase LepA</fullName>
    </alternativeName>
</protein>
<feature type="chain" id="PRO_0000176367" description="Elongation factor 4">
    <location>
        <begin position="1"/>
        <end position="601"/>
    </location>
</feature>
<feature type="domain" description="tr-type G">
    <location>
        <begin position="8"/>
        <end position="189"/>
    </location>
</feature>
<feature type="binding site" evidence="1">
    <location>
        <begin position="20"/>
        <end position="25"/>
    </location>
    <ligand>
        <name>GTP</name>
        <dbReference type="ChEBI" id="CHEBI:37565"/>
    </ligand>
</feature>
<dbReference type="EC" id="3.6.5.n1" evidence="1"/>
<dbReference type="EMBL" id="BX251411">
    <property type="protein sequence ID" value="CAD67161.1"/>
    <property type="molecule type" value="Genomic_DNA"/>
</dbReference>
<dbReference type="RefSeq" id="WP_011096441.1">
    <property type="nucleotide sequence ID" value="NC_004551.1"/>
</dbReference>
<dbReference type="SMR" id="Q83NI1"/>
<dbReference type="GeneID" id="67388273"/>
<dbReference type="KEGG" id="tws:TW494"/>
<dbReference type="HOGENOM" id="CLU_009995_3_3_11"/>
<dbReference type="GO" id="GO:0005886">
    <property type="term" value="C:plasma membrane"/>
    <property type="evidence" value="ECO:0007669"/>
    <property type="project" value="UniProtKB-SubCell"/>
</dbReference>
<dbReference type="GO" id="GO:0005525">
    <property type="term" value="F:GTP binding"/>
    <property type="evidence" value="ECO:0007669"/>
    <property type="project" value="UniProtKB-UniRule"/>
</dbReference>
<dbReference type="GO" id="GO:0003924">
    <property type="term" value="F:GTPase activity"/>
    <property type="evidence" value="ECO:0007669"/>
    <property type="project" value="UniProtKB-UniRule"/>
</dbReference>
<dbReference type="GO" id="GO:0043022">
    <property type="term" value="F:ribosome binding"/>
    <property type="evidence" value="ECO:0007669"/>
    <property type="project" value="UniProtKB-UniRule"/>
</dbReference>
<dbReference type="GO" id="GO:0003746">
    <property type="term" value="F:translation elongation factor activity"/>
    <property type="evidence" value="ECO:0007669"/>
    <property type="project" value="UniProtKB-UniRule"/>
</dbReference>
<dbReference type="GO" id="GO:0045727">
    <property type="term" value="P:positive regulation of translation"/>
    <property type="evidence" value="ECO:0007669"/>
    <property type="project" value="UniProtKB-UniRule"/>
</dbReference>
<dbReference type="CDD" id="cd03699">
    <property type="entry name" value="EF4_II"/>
    <property type="match status" value="1"/>
</dbReference>
<dbReference type="CDD" id="cd16260">
    <property type="entry name" value="EF4_III"/>
    <property type="match status" value="1"/>
</dbReference>
<dbReference type="CDD" id="cd01890">
    <property type="entry name" value="LepA"/>
    <property type="match status" value="1"/>
</dbReference>
<dbReference type="CDD" id="cd03709">
    <property type="entry name" value="lepA_C"/>
    <property type="match status" value="1"/>
</dbReference>
<dbReference type="FunFam" id="3.40.50.300:FF:000078">
    <property type="entry name" value="Elongation factor 4"/>
    <property type="match status" value="1"/>
</dbReference>
<dbReference type="FunFam" id="2.40.30.10:FF:000015">
    <property type="entry name" value="Translation factor GUF1, mitochondrial"/>
    <property type="match status" value="1"/>
</dbReference>
<dbReference type="FunFam" id="3.30.70.240:FF:000007">
    <property type="entry name" value="Translation factor GUF1, mitochondrial"/>
    <property type="match status" value="1"/>
</dbReference>
<dbReference type="FunFam" id="3.30.70.2570:FF:000001">
    <property type="entry name" value="Translation factor GUF1, mitochondrial"/>
    <property type="match status" value="1"/>
</dbReference>
<dbReference type="FunFam" id="3.30.70.870:FF:000004">
    <property type="entry name" value="Translation factor GUF1, mitochondrial"/>
    <property type="match status" value="1"/>
</dbReference>
<dbReference type="Gene3D" id="3.30.70.240">
    <property type="match status" value="1"/>
</dbReference>
<dbReference type="Gene3D" id="3.30.70.2570">
    <property type="entry name" value="Elongation factor 4, C-terminal domain"/>
    <property type="match status" value="1"/>
</dbReference>
<dbReference type="Gene3D" id="3.30.70.870">
    <property type="entry name" value="Elongation Factor G (Translational Gtpase), domain 3"/>
    <property type="match status" value="1"/>
</dbReference>
<dbReference type="Gene3D" id="3.40.50.300">
    <property type="entry name" value="P-loop containing nucleotide triphosphate hydrolases"/>
    <property type="match status" value="1"/>
</dbReference>
<dbReference type="Gene3D" id="2.40.30.10">
    <property type="entry name" value="Translation factors"/>
    <property type="match status" value="1"/>
</dbReference>
<dbReference type="HAMAP" id="MF_00071">
    <property type="entry name" value="LepA"/>
    <property type="match status" value="1"/>
</dbReference>
<dbReference type="InterPro" id="IPR006297">
    <property type="entry name" value="EF-4"/>
</dbReference>
<dbReference type="InterPro" id="IPR035647">
    <property type="entry name" value="EFG_III/V"/>
</dbReference>
<dbReference type="InterPro" id="IPR000640">
    <property type="entry name" value="EFG_V-like"/>
</dbReference>
<dbReference type="InterPro" id="IPR004161">
    <property type="entry name" value="EFTu-like_2"/>
</dbReference>
<dbReference type="InterPro" id="IPR031157">
    <property type="entry name" value="G_TR_CS"/>
</dbReference>
<dbReference type="InterPro" id="IPR038363">
    <property type="entry name" value="LepA_C_sf"/>
</dbReference>
<dbReference type="InterPro" id="IPR013842">
    <property type="entry name" value="LepA_CTD"/>
</dbReference>
<dbReference type="InterPro" id="IPR035654">
    <property type="entry name" value="LepA_IV"/>
</dbReference>
<dbReference type="InterPro" id="IPR027417">
    <property type="entry name" value="P-loop_NTPase"/>
</dbReference>
<dbReference type="InterPro" id="IPR005225">
    <property type="entry name" value="Small_GTP-bd"/>
</dbReference>
<dbReference type="InterPro" id="IPR000795">
    <property type="entry name" value="T_Tr_GTP-bd_dom"/>
</dbReference>
<dbReference type="NCBIfam" id="TIGR01393">
    <property type="entry name" value="lepA"/>
    <property type="match status" value="1"/>
</dbReference>
<dbReference type="NCBIfam" id="TIGR00231">
    <property type="entry name" value="small_GTP"/>
    <property type="match status" value="1"/>
</dbReference>
<dbReference type="PANTHER" id="PTHR43512:SF4">
    <property type="entry name" value="TRANSLATION FACTOR GUF1 HOMOLOG, CHLOROPLASTIC"/>
    <property type="match status" value="1"/>
</dbReference>
<dbReference type="PANTHER" id="PTHR43512">
    <property type="entry name" value="TRANSLATION FACTOR GUF1-RELATED"/>
    <property type="match status" value="1"/>
</dbReference>
<dbReference type="Pfam" id="PF00679">
    <property type="entry name" value="EFG_C"/>
    <property type="match status" value="1"/>
</dbReference>
<dbReference type="Pfam" id="PF00009">
    <property type="entry name" value="GTP_EFTU"/>
    <property type="match status" value="1"/>
</dbReference>
<dbReference type="Pfam" id="PF03144">
    <property type="entry name" value="GTP_EFTU_D2"/>
    <property type="match status" value="1"/>
</dbReference>
<dbReference type="Pfam" id="PF06421">
    <property type="entry name" value="LepA_C"/>
    <property type="match status" value="1"/>
</dbReference>
<dbReference type="PRINTS" id="PR00315">
    <property type="entry name" value="ELONGATNFCT"/>
</dbReference>
<dbReference type="SMART" id="SM00838">
    <property type="entry name" value="EFG_C"/>
    <property type="match status" value="1"/>
</dbReference>
<dbReference type="SUPFAM" id="SSF54980">
    <property type="entry name" value="EF-G C-terminal domain-like"/>
    <property type="match status" value="2"/>
</dbReference>
<dbReference type="SUPFAM" id="SSF52540">
    <property type="entry name" value="P-loop containing nucleoside triphosphate hydrolases"/>
    <property type="match status" value="1"/>
</dbReference>
<dbReference type="PROSITE" id="PS00301">
    <property type="entry name" value="G_TR_1"/>
    <property type="match status" value="1"/>
</dbReference>
<dbReference type="PROSITE" id="PS51722">
    <property type="entry name" value="G_TR_2"/>
    <property type="match status" value="1"/>
</dbReference>
<gene>
    <name evidence="1" type="primary">lepA</name>
    <name type="ordered locus">TW494</name>
</gene>
<comment type="function">
    <text evidence="1">Required for accurate and efficient protein synthesis under certain stress conditions. May act as a fidelity factor of the translation reaction, by catalyzing a one-codon backward translocation of tRNAs on improperly translocated ribosomes. Back-translocation proceeds from a post-translocation (POST) complex to a pre-translocation (PRE) complex, thus giving elongation factor G a second chance to translocate the tRNAs correctly. Binds to ribosomes in a GTP-dependent manner.</text>
</comment>
<comment type="catalytic activity">
    <reaction evidence="1">
        <text>GTP + H2O = GDP + phosphate + H(+)</text>
        <dbReference type="Rhea" id="RHEA:19669"/>
        <dbReference type="ChEBI" id="CHEBI:15377"/>
        <dbReference type="ChEBI" id="CHEBI:15378"/>
        <dbReference type="ChEBI" id="CHEBI:37565"/>
        <dbReference type="ChEBI" id="CHEBI:43474"/>
        <dbReference type="ChEBI" id="CHEBI:58189"/>
        <dbReference type="EC" id="3.6.5.n1"/>
    </reaction>
</comment>
<comment type="subcellular location">
    <subcellularLocation>
        <location evidence="1">Cell membrane</location>
        <topology evidence="1">Peripheral membrane protein</topology>
        <orientation evidence="1">Cytoplasmic side</orientation>
    </subcellularLocation>
</comment>
<comment type="similarity">
    <text evidence="1">Belongs to the TRAFAC class translation factor GTPase superfamily. Classic translation factor GTPase family. LepA subfamily.</text>
</comment>
<reference key="1">
    <citation type="journal article" date="2003" name="Lancet">
        <title>Sequencing and analysis of the genome of the Whipple's disease bacterium Tropheryma whipplei.</title>
        <authorList>
            <person name="Bentley S.D."/>
            <person name="Maiwald M."/>
            <person name="Murphy L.D."/>
            <person name="Pallen M.J."/>
            <person name="Yeats C.A."/>
            <person name="Dover L.G."/>
            <person name="Norbertczak H.T."/>
            <person name="Besra G.S."/>
            <person name="Quail M.A."/>
            <person name="Harris D.E."/>
            <person name="von Herbay A."/>
            <person name="Goble A."/>
            <person name="Rutter S."/>
            <person name="Squares R."/>
            <person name="Squares S."/>
            <person name="Barrell B.G."/>
            <person name="Parkhill J."/>
            <person name="Relman D.A."/>
        </authorList>
    </citation>
    <scope>NUCLEOTIDE SEQUENCE [LARGE SCALE GENOMIC DNA]</scope>
    <source>
        <strain>TW08/27</strain>
    </source>
</reference>
<evidence type="ECO:0000255" key="1">
    <source>
        <dbReference type="HAMAP-Rule" id="MF_00071"/>
    </source>
</evidence>
<proteinExistence type="inferred from homology"/>
<name>LEPA_TROW8</name>
<sequence>MTDRVLPEQIRNFGIIAHVDHGKSTLADRILQLTGAVSDRDMREQYLDRLYIERERGITIKSQAVTLQWDCDATQYVLNMVDTPGHVDFTYEVSRSLAACEAAVILVDATQGVEAQTLANLHLAIENNLLIIPVLSKVDLPSADVEGATLELSEVLECRVEDVMHVSGKTGYGVKELLDLIVRKAPPPKGDVTSAPRALIFDSIYDSYRGVVTYVKMCDGTIRVGDKIRMMSTGAEHTLLEVGVSNPEPQSRHSLSVGEVGYFITGVKDVRKSRVGDTITTDTHTATVPLPGYSNPKPMVFSGIYPLNGNEYSALREGLDRLKLSDASIVYTPETSAALGFGFRCGFLGLLHMEIVSERLNREFGLATISTAPSVAYEITPDGEKTLVVMNPSDFPSGKIKEIKEPTVKVSILSPKEYIGSIMELCQARRGVMQGIEYFGSVRAELIYVMPLAEIVFDFFDSLKSRTKGYASFDYNPEGSQPADLVKVDILLQGNKVDAFSAIVHSSKAYSYGSSISKRLSELIPRQQFEVPIQAAIGSRVVARETIRAVRKDVVAKCYGGDITRKRKLLERQKQGKARMKLIGRVEVPQEVFVATLSSYK</sequence>
<organism>
    <name type="scientific">Tropheryma whipplei (strain TW08/27)</name>
    <name type="common">Whipple's bacillus</name>
    <dbReference type="NCBI Taxonomy" id="218496"/>
    <lineage>
        <taxon>Bacteria</taxon>
        <taxon>Bacillati</taxon>
        <taxon>Actinomycetota</taxon>
        <taxon>Actinomycetes</taxon>
        <taxon>Micrococcales</taxon>
        <taxon>Tropherymataceae</taxon>
        <taxon>Tropheryma</taxon>
    </lineage>
</organism>